<protein>
    <recommendedName>
        <fullName>Spermatogenesis-associated protein 4</fullName>
    </recommendedName>
</protein>
<organism>
    <name type="scientific">Pan troglodytes</name>
    <name type="common">Chimpanzee</name>
    <dbReference type="NCBI Taxonomy" id="9598"/>
    <lineage>
        <taxon>Eukaryota</taxon>
        <taxon>Metazoa</taxon>
        <taxon>Chordata</taxon>
        <taxon>Craniata</taxon>
        <taxon>Vertebrata</taxon>
        <taxon>Euteleostomi</taxon>
        <taxon>Mammalia</taxon>
        <taxon>Eutheria</taxon>
        <taxon>Euarchontoglires</taxon>
        <taxon>Primates</taxon>
        <taxon>Haplorrhini</taxon>
        <taxon>Catarrhini</taxon>
        <taxon>Hominidae</taxon>
        <taxon>Pan</taxon>
    </lineage>
</organism>
<name>SPAT4_PANTR</name>
<reference key="1">
    <citation type="submission" date="2004-06" db="EMBL/GenBank/DDBJ databases">
        <title>Molecular cloning of SPATA4, a chimpanzee testis spermatocyte apoptosis-related gene.</title>
        <authorList>
            <person name="Liu S."/>
            <person name="Wang Z."/>
        </authorList>
    </citation>
    <scope>NUCLEOTIDE SEQUENCE [MRNA]</scope>
</reference>
<evidence type="ECO:0000250" key="1">
    <source>
        <dbReference type="UniProtKB" id="Q8NEY3"/>
    </source>
</evidence>
<evidence type="ECO:0000255" key="2">
    <source>
        <dbReference type="PROSITE-ProRule" id="PRU00044"/>
    </source>
</evidence>
<dbReference type="EMBL" id="AY660661">
    <property type="protein sequence ID" value="AAT74558.1"/>
    <property type="molecule type" value="mRNA"/>
</dbReference>
<dbReference type="RefSeq" id="NP_001008990.1">
    <property type="nucleotide sequence ID" value="NM_001008990.1"/>
</dbReference>
<dbReference type="SMR" id="Q6DMN8"/>
<dbReference type="FunCoup" id="Q6DMN8">
    <property type="interactions" value="11"/>
</dbReference>
<dbReference type="STRING" id="9598.ENSPTRP00000028504"/>
<dbReference type="PaxDb" id="9598-ENSPTRP00000028504"/>
<dbReference type="Ensembl" id="ENSPTRT00000030864.2">
    <property type="protein sequence ID" value="ENSPTRP00000028504.1"/>
    <property type="gene ID" value="ENSPTRG00000016612.2"/>
</dbReference>
<dbReference type="GeneID" id="449514"/>
<dbReference type="KEGG" id="ptr:449514"/>
<dbReference type="CTD" id="132851"/>
<dbReference type="VGNC" id="VGNC:695">
    <property type="gene designation" value="SPATA4"/>
</dbReference>
<dbReference type="eggNOG" id="ENOG502QU8V">
    <property type="taxonomic scope" value="Eukaryota"/>
</dbReference>
<dbReference type="GeneTree" id="ENSGT00910000144159"/>
<dbReference type="HOGENOM" id="CLU_077979_1_0_1"/>
<dbReference type="InParanoid" id="Q6DMN8"/>
<dbReference type="OMA" id="CIYYPWD"/>
<dbReference type="OrthoDB" id="8324at9604"/>
<dbReference type="TreeFam" id="TF323506"/>
<dbReference type="Proteomes" id="UP000002277">
    <property type="component" value="Chromosome 4"/>
</dbReference>
<dbReference type="Bgee" id="ENSPTRG00000016612">
    <property type="expression patterns" value="Expressed in testis and 14 other cell types or tissues"/>
</dbReference>
<dbReference type="GO" id="GO:0005930">
    <property type="term" value="C:axoneme"/>
    <property type="evidence" value="ECO:0000318"/>
    <property type="project" value="GO_Central"/>
</dbReference>
<dbReference type="GO" id="GO:0005829">
    <property type="term" value="C:cytosol"/>
    <property type="evidence" value="ECO:0007669"/>
    <property type="project" value="Ensembl"/>
</dbReference>
<dbReference type="GO" id="GO:0005654">
    <property type="term" value="C:nucleoplasm"/>
    <property type="evidence" value="ECO:0007669"/>
    <property type="project" value="Ensembl"/>
</dbReference>
<dbReference type="GO" id="GO:0008017">
    <property type="term" value="F:microtubule binding"/>
    <property type="evidence" value="ECO:0000318"/>
    <property type="project" value="GO_Central"/>
</dbReference>
<dbReference type="GO" id="GO:0051493">
    <property type="term" value="P:regulation of cytoskeleton organization"/>
    <property type="evidence" value="ECO:0000318"/>
    <property type="project" value="GO_Central"/>
</dbReference>
<dbReference type="FunFam" id="1.10.418.10:FF:000061">
    <property type="entry name" value="Spermatogenesis associated 4"/>
    <property type="match status" value="1"/>
</dbReference>
<dbReference type="Gene3D" id="1.10.418.10">
    <property type="entry name" value="Calponin-like domain"/>
    <property type="match status" value="1"/>
</dbReference>
<dbReference type="InterPro" id="IPR010441">
    <property type="entry name" value="CH_2"/>
</dbReference>
<dbReference type="InterPro" id="IPR001715">
    <property type="entry name" value="CH_dom"/>
</dbReference>
<dbReference type="InterPro" id="IPR036872">
    <property type="entry name" value="CH_dom_sf"/>
</dbReference>
<dbReference type="InterPro" id="IPR052111">
    <property type="entry name" value="Spermatogenesis_Ciliary_MAP"/>
</dbReference>
<dbReference type="PANTHER" id="PTHR12509">
    <property type="entry name" value="SPERMATOGENESIS-ASSOCIATED 4-RELATED"/>
    <property type="match status" value="1"/>
</dbReference>
<dbReference type="PANTHER" id="PTHR12509:SF8">
    <property type="entry name" value="SPERMATOGENESIS-ASSOCIATED PROTEIN 4"/>
    <property type="match status" value="1"/>
</dbReference>
<dbReference type="Pfam" id="PF06294">
    <property type="entry name" value="CH_2"/>
    <property type="match status" value="1"/>
</dbReference>
<dbReference type="PROSITE" id="PS50021">
    <property type="entry name" value="CH"/>
    <property type="match status" value="1"/>
</dbReference>
<keyword id="KW-0539">Nucleus</keyword>
<keyword id="KW-1185">Reference proteome</keyword>
<gene>
    <name type="primary">SPATA4</name>
</gene>
<feature type="chain" id="PRO_0000072103" description="Spermatogenesis-associated protein 4">
    <location>
        <begin position="1"/>
        <end position="305"/>
    </location>
</feature>
<feature type="domain" description="Calponin-homology (CH)" evidence="2">
    <location>
        <begin position="49"/>
        <end position="155"/>
    </location>
</feature>
<accession>Q6DMN8</accession>
<proteinExistence type="evidence at transcript level"/>
<sequence length="305" mass="34707">MAAAGREKGYVTQTAAALDKSPSLSPQLAAPIRGRPKKCLVYPHAPKSSRLSRSVLRWLQGLDLSFFPRNINRDFSNGFLIAEIFCIYYPWELELSSFENGTSLKVKLGNWAQLEKFLARKKFKLPKELIHGTIHCKAGVPEILIEEVYTLLTHREIKSIQDDFVNFTDYSYQMRLPLVSRSTVSKSIKDNIRLSELLSNPNMLTNELKAEFLILLHMLQRKLGRKLNPEWFDVKPTVGEVTLNHLPAQASGRRYNLKVKRGRVVPVLPNIGSGGSSHREIHVKQAGQHSYYSAMKPIRNMDKKP</sequence>
<comment type="function">
    <text evidence="1">May play a role in apoptosis regulation.</text>
</comment>
<comment type="subcellular location">
    <subcellularLocation>
        <location evidence="1">Nucleus</location>
    </subcellularLocation>
</comment>